<evidence type="ECO:0000255" key="1">
    <source>
        <dbReference type="HAMAP-Rule" id="MF_00252"/>
    </source>
</evidence>
<proteinExistence type="inferred from homology"/>
<protein>
    <recommendedName>
        <fullName evidence="1">Lysine--tRNA ligase</fullName>
        <ecNumber evidence="1">6.1.1.6</ecNumber>
    </recommendedName>
    <alternativeName>
        <fullName evidence="1">Lysyl-tRNA synthetase</fullName>
        <shortName evidence="1">LysRS</shortName>
    </alternativeName>
</protein>
<accession>B1IAN6</accession>
<comment type="catalytic activity">
    <reaction evidence="1">
        <text>tRNA(Lys) + L-lysine + ATP = L-lysyl-tRNA(Lys) + AMP + diphosphate</text>
        <dbReference type="Rhea" id="RHEA:20792"/>
        <dbReference type="Rhea" id="RHEA-COMP:9696"/>
        <dbReference type="Rhea" id="RHEA-COMP:9697"/>
        <dbReference type="ChEBI" id="CHEBI:30616"/>
        <dbReference type="ChEBI" id="CHEBI:32551"/>
        <dbReference type="ChEBI" id="CHEBI:33019"/>
        <dbReference type="ChEBI" id="CHEBI:78442"/>
        <dbReference type="ChEBI" id="CHEBI:78529"/>
        <dbReference type="ChEBI" id="CHEBI:456215"/>
        <dbReference type="EC" id="6.1.1.6"/>
    </reaction>
</comment>
<comment type="cofactor">
    <cofactor evidence="1">
        <name>Mg(2+)</name>
        <dbReference type="ChEBI" id="CHEBI:18420"/>
    </cofactor>
    <text evidence="1">Binds 3 Mg(2+) ions per subunit.</text>
</comment>
<comment type="subunit">
    <text evidence="1">Homodimer.</text>
</comment>
<comment type="subcellular location">
    <subcellularLocation>
        <location evidence="1">Cytoplasm</location>
    </subcellularLocation>
</comment>
<comment type="similarity">
    <text evidence="1">Belongs to the class-II aminoacyl-tRNA synthetase family.</text>
</comment>
<name>SYK_STRPI</name>
<keyword id="KW-0030">Aminoacyl-tRNA synthetase</keyword>
<keyword id="KW-0067">ATP-binding</keyword>
<keyword id="KW-0963">Cytoplasm</keyword>
<keyword id="KW-0436">Ligase</keyword>
<keyword id="KW-0460">Magnesium</keyword>
<keyword id="KW-0479">Metal-binding</keyword>
<keyword id="KW-0547">Nucleotide-binding</keyword>
<keyword id="KW-0648">Protein biosynthesis</keyword>
<dbReference type="EC" id="6.1.1.6" evidence="1"/>
<dbReference type="EMBL" id="CP000936">
    <property type="protein sequence ID" value="ACA35903.1"/>
    <property type="molecule type" value="Genomic_DNA"/>
</dbReference>
<dbReference type="RefSeq" id="WP_000102462.1">
    <property type="nucleotide sequence ID" value="NC_010380.1"/>
</dbReference>
<dbReference type="SMR" id="B1IAN6"/>
<dbReference type="KEGG" id="spv:SPH_0799"/>
<dbReference type="HOGENOM" id="CLU_008255_6_0_9"/>
<dbReference type="Proteomes" id="UP000002163">
    <property type="component" value="Chromosome"/>
</dbReference>
<dbReference type="GO" id="GO:0005829">
    <property type="term" value="C:cytosol"/>
    <property type="evidence" value="ECO:0007669"/>
    <property type="project" value="TreeGrafter"/>
</dbReference>
<dbReference type="GO" id="GO:0005524">
    <property type="term" value="F:ATP binding"/>
    <property type="evidence" value="ECO:0007669"/>
    <property type="project" value="UniProtKB-UniRule"/>
</dbReference>
<dbReference type="GO" id="GO:0140096">
    <property type="term" value="F:catalytic activity, acting on a protein"/>
    <property type="evidence" value="ECO:0007669"/>
    <property type="project" value="UniProtKB-ARBA"/>
</dbReference>
<dbReference type="GO" id="GO:0004824">
    <property type="term" value="F:lysine-tRNA ligase activity"/>
    <property type="evidence" value="ECO:0007669"/>
    <property type="project" value="UniProtKB-UniRule"/>
</dbReference>
<dbReference type="GO" id="GO:0000287">
    <property type="term" value="F:magnesium ion binding"/>
    <property type="evidence" value="ECO:0007669"/>
    <property type="project" value="UniProtKB-UniRule"/>
</dbReference>
<dbReference type="GO" id="GO:0016740">
    <property type="term" value="F:transferase activity"/>
    <property type="evidence" value="ECO:0007669"/>
    <property type="project" value="UniProtKB-ARBA"/>
</dbReference>
<dbReference type="GO" id="GO:0000049">
    <property type="term" value="F:tRNA binding"/>
    <property type="evidence" value="ECO:0007669"/>
    <property type="project" value="TreeGrafter"/>
</dbReference>
<dbReference type="GO" id="GO:0006430">
    <property type="term" value="P:lysyl-tRNA aminoacylation"/>
    <property type="evidence" value="ECO:0007669"/>
    <property type="project" value="UniProtKB-UniRule"/>
</dbReference>
<dbReference type="CDD" id="cd00775">
    <property type="entry name" value="LysRS_core"/>
    <property type="match status" value="1"/>
</dbReference>
<dbReference type="CDD" id="cd04322">
    <property type="entry name" value="LysRS_N"/>
    <property type="match status" value="1"/>
</dbReference>
<dbReference type="FunFam" id="2.40.50.140:FF:000024">
    <property type="entry name" value="Lysine--tRNA ligase"/>
    <property type="match status" value="1"/>
</dbReference>
<dbReference type="FunFam" id="3.30.930.10:FF:000001">
    <property type="entry name" value="Lysine--tRNA ligase"/>
    <property type="match status" value="1"/>
</dbReference>
<dbReference type="Gene3D" id="3.30.930.10">
    <property type="entry name" value="Bira Bifunctional Protein, Domain 2"/>
    <property type="match status" value="1"/>
</dbReference>
<dbReference type="Gene3D" id="2.40.50.140">
    <property type="entry name" value="Nucleic acid-binding proteins"/>
    <property type="match status" value="1"/>
</dbReference>
<dbReference type="HAMAP" id="MF_00252">
    <property type="entry name" value="Lys_tRNA_synth_class2"/>
    <property type="match status" value="1"/>
</dbReference>
<dbReference type="InterPro" id="IPR004364">
    <property type="entry name" value="Aa-tRNA-synt_II"/>
</dbReference>
<dbReference type="InterPro" id="IPR006195">
    <property type="entry name" value="aa-tRNA-synth_II"/>
</dbReference>
<dbReference type="InterPro" id="IPR045864">
    <property type="entry name" value="aa-tRNA-synth_II/BPL/LPL"/>
</dbReference>
<dbReference type="InterPro" id="IPR002313">
    <property type="entry name" value="Lys-tRNA-ligase_II"/>
</dbReference>
<dbReference type="InterPro" id="IPR034762">
    <property type="entry name" value="Lys-tRNA-ligase_II_bac/euk"/>
</dbReference>
<dbReference type="InterPro" id="IPR044136">
    <property type="entry name" value="Lys-tRNA-ligase_II_N"/>
</dbReference>
<dbReference type="InterPro" id="IPR018149">
    <property type="entry name" value="Lys-tRNA-synth_II_C"/>
</dbReference>
<dbReference type="InterPro" id="IPR012340">
    <property type="entry name" value="NA-bd_OB-fold"/>
</dbReference>
<dbReference type="InterPro" id="IPR004365">
    <property type="entry name" value="NA-bd_OB_tRNA"/>
</dbReference>
<dbReference type="NCBIfam" id="TIGR00499">
    <property type="entry name" value="lysS_bact"/>
    <property type="match status" value="1"/>
</dbReference>
<dbReference type="NCBIfam" id="NF001756">
    <property type="entry name" value="PRK00484.1"/>
    <property type="match status" value="1"/>
</dbReference>
<dbReference type="PANTHER" id="PTHR42918:SF15">
    <property type="entry name" value="LYSINE--TRNA LIGASE, CHLOROPLASTIC_MITOCHONDRIAL"/>
    <property type="match status" value="1"/>
</dbReference>
<dbReference type="PANTHER" id="PTHR42918">
    <property type="entry name" value="LYSYL-TRNA SYNTHETASE"/>
    <property type="match status" value="1"/>
</dbReference>
<dbReference type="Pfam" id="PF00152">
    <property type="entry name" value="tRNA-synt_2"/>
    <property type="match status" value="1"/>
</dbReference>
<dbReference type="Pfam" id="PF01336">
    <property type="entry name" value="tRNA_anti-codon"/>
    <property type="match status" value="1"/>
</dbReference>
<dbReference type="PIRSF" id="PIRSF039101">
    <property type="entry name" value="LysRS2"/>
    <property type="match status" value="1"/>
</dbReference>
<dbReference type="PRINTS" id="PR00982">
    <property type="entry name" value="TRNASYNTHLYS"/>
</dbReference>
<dbReference type="SUPFAM" id="SSF55681">
    <property type="entry name" value="Class II aaRS and biotin synthetases"/>
    <property type="match status" value="1"/>
</dbReference>
<dbReference type="SUPFAM" id="SSF50249">
    <property type="entry name" value="Nucleic acid-binding proteins"/>
    <property type="match status" value="1"/>
</dbReference>
<dbReference type="PROSITE" id="PS50862">
    <property type="entry name" value="AA_TRNA_LIGASE_II"/>
    <property type="match status" value="1"/>
</dbReference>
<gene>
    <name evidence="1" type="primary">lysS</name>
    <name type="ordered locus">SPH_0799</name>
</gene>
<sequence length="496" mass="56680">MSTEHMEELNDQQIVRREKMAALREQGIDPFGKRFERTANSQELKDKYANLDKEQLHDKNETATIAGRLVTKRGKGKVGFAHLQDREGQIQIYVRKDAVGEENYEIFKKADLGDFLGVEGEVMRTDMGELSIKATHITHLSKALRPLPEKFHGLTDVETIYRKRYLDLISNRESFERFVTRSKIISEIRRYLDQKGFLEVETPVLHNEAGGAAARPFITHHNAQNIDMVLRIATELHLKRLIVGGMERVYEIGRIFRNEGMDATHNPEFTSIEVYQAYADFQDIMDLTEGIIQHAAKSVKGDGPVNYQGTEIKINEPFKRVHMVDAIREITGVDFWQDMTLKEAKAIAAEKKVPVEKHYTEVGHIINAFFEEFVEETLIQPTFVYGHPVAVSPLAKKNPEDQRFTDRFELFIMTKEYGNAFTELNDPIDQLSRFEAQAKAKELGDDEATGIDYDYIEALEYGMPPTGGLGIGIDRLCMLLTDTTTIRDVLLFPTMK</sequence>
<reference key="1">
    <citation type="journal article" date="2010" name="Genome Biol.">
        <title>Structure and dynamics of the pan-genome of Streptococcus pneumoniae and closely related species.</title>
        <authorList>
            <person name="Donati C."/>
            <person name="Hiller N.L."/>
            <person name="Tettelin H."/>
            <person name="Muzzi A."/>
            <person name="Croucher N.J."/>
            <person name="Angiuoli S.V."/>
            <person name="Oggioni M."/>
            <person name="Dunning Hotopp J.C."/>
            <person name="Hu F.Z."/>
            <person name="Riley D.R."/>
            <person name="Covacci A."/>
            <person name="Mitchell T.J."/>
            <person name="Bentley S.D."/>
            <person name="Kilian M."/>
            <person name="Ehrlich G.D."/>
            <person name="Rappuoli R."/>
            <person name="Moxon E.R."/>
            <person name="Masignani V."/>
        </authorList>
    </citation>
    <scope>NUCLEOTIDE SEQUENCE [LARGE SCALE GENOMIC DNA]</scope>
    <source>
        <strain>Hungary19A-6</strain>
    </source>
</reference>
<organism>
    <name type="scientific">Streptococcus pneumoniae (strain Hungary19A-6)</name>
    <dbReference type="NCBI Taxonomy" id="487214"/>
    <lineage>
        <taxon>Bacteria</taxon>
        <taxon>Bacillati</taxon>
        <taxon>Bacillota</taxon>
        <taxon>Bacilli</taxon>
        <taxon>Lactobacillales</taxon>
        <taxon>Streptococcaceae</taxon>
        <taxon>Streptococcus</taxon>
    </lineage>
</organism>
<feature type="chain" id="PRO_1000101151" description="Lysine--tRNA ligase">
    <location>
        <begin position="1"/>
        <end position="496"/>
    </location>
</feature>
<feature type="binding site" evidence="1">
    <location>
        <position position="409"/>
    </location>
    <ligand>
        <name>Mg(2+)</name>
        <dbReference type="ChEBI" id="CHEBI:18420"/>
        <label>1</label>
    </ligand>
</feature>
<feature type="binding site" evidence="1">
    <location>
        <position position="416"/>
    </location>
    <ligand>
        <name>Mg(2+)</name>
        <dbReference type="ChEBI" id="CHEBI:18420"/>
        <label>1</label>
    </ligand>
</feature>
<feature type="binding site" evidence="1">
    <location>
        <position position="416"/>
    </location>
    <ligand>
        <name>Mg(2+)</name>
        <dbReference type="ChEBI" id="CHEBI:18420"/>
        <label>2</label>
    </ligand>
</feature>